<feature type="chain" id="PRO_0000353367" description="DNA-directed RNA polymerase subunit beta'">
    <location>
        <begin position="1"/>
        <end position="1416"/>
    </location>
</feature>
<feature type="binding site" evidence="1">
    <location>
        <position position="68"/>
    </location>
    <ligand>
        <name>Zn(2+)</name>
        <dbReference type="ChEBI" id="CHEBI:29105"/>
        <label>1</label>
    </ligand>
</feature>
<feature type="binding site" evidence="1">
    <location>
        <position position="70"/>
    </location>
    <ligand>
        <name>Zn(2+)</name>
        <dbReference type="ChEBI" id="CHEBI:29105"/>
        <label>1</label>
    </ligand>
</feature>
<feature type="binding site" evidence="1">
    <location>
        <position position="83"/>
    </location>
    <ligand>
        <name>Zn(2+)</name>
        <dbReference type="ChEBI" id="CHEBI:29105"/>
        <label>1</label>
    </ligand>
</feature>
<feature type="binding site" evidence="1">
    <location>
        <position position="86"/>
    </location>
    <ligand>
        <name>Zn(2+)</name>
        <dbReference type="ChEBI" id="CHEBI:29105"/>
        <label>1</label>
    </ligand>
</feature>
<feature type="binding site" evidence="1">
    <location>
        <position position="458"/>
    </location>
    <ligand>
        <name>Mg(2+)</name>
        <dbReference type="ChEBI" id="CHEBI:18420"/>
    </ligand>
</feature>
<feature type="binding site" evidence="1">
    <location>
        <position position="460"/>
    </location>
    <ligand>
        <name>Mg(2+)</name>
        <dbReference type="ChEBI" id="CHEBI:18420"/>
    </ligand>
</feature>
<feature type="binding site" evidence="1">
    <location>
        <position position="462"/>
    </location>
    <ligand>
        <name>Mg(2+)</name>
        <dbReference type="ChEBI" id="CHEBI:18420"/>
    </ligand>
</feature>
<feature type="binding site" evidence="1">
    <location>
        <position position="811"/>
    </location>
    <ligand>
        <name>Zn(2+)</name>
        <dbReference type="ChEBI" id="CHEBI:29105"/>
        <label>2</label>
    </ligand>
</feature>
<feature type="binding site" evidence="1">
    <location>
        <position position="884"/>
    </location>
    <ligand>
        <name>Zn(2+)</name>
        <dbReference type="ChEBI" id="CHEBI:29105"/>
        <label>2</label>
    </ligand>
</feature>
<feature type="binding site" evidence="1">
    <location>
        <position position="891"/>
    </location>
    <ligand>
        <name>Zn(2+)</name>
        <dbReference type="ChEBI" id="CHEBI:29105"/>
        <label>2</label>
    </ligand>
</feature>
<feature type="binding site" evidence="1">
    <location>
        <position position="894"/>
    </location>
    <ligand>
        <name>Zn(2+)</name>
        <dbReference type="ChEBI" id="CHEBI:29105"/>
        <label>2</label>
    </ligand>
</feature>
<protein>
    <recommendedName>
        <fullName evidence="1">DNA-directed RNA polymerase subunit beta'</fullName>
        <shortName evidence="1">RNAP subunit beta'</shortName>
        <ecNumber evidence="1">2.7.7.6</ecNumber>
    </recommendedName>
    <alternativeName>
        <fullName evidence="1">RNA polymerase subunit beta'</fullName>
    </alternativeName>
    <alternativeName>
        <fullName evidence="1">Transcriptase subunit beta'</fullName>
    </alternativeName>
</protein>
<gene>
    <name evidence="1" type="primary">rpoC</name>
    <name type="ordered locus">Fphi_1047</name>
</gene>
<reference key="1">
    <citation type="submission" date="2007-12" db="EMBL/GenBank/DDBJ databases">
        <title>Complete sequence of chromosome of Francisella philomiragia subsp. philomiragia ATCC 25017.</title>
        <authorList>
            <consortium name="US DOE Joint Genome Institute"/>
            <person name="Copeland A."/>
            <person name="Lucas S."/>
            <person name="Lapidus A."/>
            <person name="Barry K."/>
            <person name="Detter J.C."/>
            <person name="Glavina del Rio T."/>
            <person name="Hammon N."/>
            <person name="Israni S."/>
            <person name="Dalin E."/>
            <person name="Tice H."/>
            <person name="Pitluck S."/>
            <person name="Chain P."/>
            <person name="Malfatti S."/>
            <person name="Shin M."/>
            <person name="Vergez L."/>
            <person name="Schmutz J."/>
            <person name="Larimer F."/>
            <person name="Land M."/>
            <person name="Hauser L."/>
            <person name="Richardson P."/>
        </authorList>
    </citation>
    <scope>NUCLEOTIDE SEQUENCE [LARGE SCALE GENOMIC DNA]</scope>
    <source>
        <strain>ATCC 25017 / CCUG 19701 / FSC 153 / O#319-036</strain>
    </source>
</reference>
<dbReference type="EC" id="2.7.7.6" evidence="1"/>
<dbReference type="EMBL" id="CP000937">
    <property type="protein sequence ID" value="ABZ87269.1"/>
    <property type="molecule type" value="Genomic_DNA"/>
</dbReference>
<dbReference type="SMR" id="B0TX11"/>
<dbReference type="KEGG" id="fph:Fphi_1047"/>
<dbReference type="eggNOG" id="COG0086">
    <property type="taxonomic scope" value="Bacteria"/>
</dbReference>
<dbReference type="HOGENOM" id="CLU_000524_3_1_6"/>
<dbReference type="GO" id="GO:0000428">
    <property type="term" value="C:DNA-directed RNA polymerase complex"/>
    <property type="evidence" value="ECO:0007669"/>
    <property type="project" value="UniProtKB-KW"/>
</dbReference>
<dbReference type="GO" id="GO:0003677">
    <property type="term" value="F:DNA binding"/>
    <property type="evidence" value="ECO:0007669"/>
    <property type="project" value="UniProtKB-UniRule"/>
</dbReference>
<dbReference type="GO" id="GO:0003899">
    <property type="term" value="F:DNA-directed RNA polymerase activity"/>
    <property type="evidence" value="ECO:0007669"/>
    <property type="project" value="UniProtKB-UniRule"/>
</dbReference>
<dbReference type="GO" id="GO:0000287">
    <property type="term" value="F:magnesium ion binding"/>
    <property type="evidence" value="ECO:0007669"/>
    <property type="project" value="UniProtKB-UniRule"/>
</dbReference>
<dbReference type="GO" id="GO:0008270">
    <property type="term" value="F:zinc ion binding"/>
    <property type="evidence" value="ECO:0007669"/>
    <property type="project" value="UniProtKB-UniRule"/>
</dbReference>
<dbReference type="GO" id="GO:0006351">
    <property type="term" value="P:DNA-templated transcription"/>
    <property type="evidence" value="ECO:0007669"/>
    <property type="project" value="UniProtKB-UniRule"/>
</dbReference>
<dbReference type="CDD" id="cd02655">
    <property type="entry name" value="RNAP_beta'_C"/>
    <property type="match status" value="1"/>
</dbReference>
<dbReference type="CDD" id="cd01609">
    <property type="entry name" value="RNAP_beta'_N"/>
    <property type="match status" value="1"/>
</dbReference>
<dbReference type="FunFam" id="1.10.132.30:FF:000003">
    <property type="entry name" value="DNA-directed RNA polymerase subunit beta"/>
    <property type="match status" value="1"/>
</dbReference>
<dbReference type="Gene3D" id="1.10.132.30">
    <property type="match status" value="1"/>
</dbReference>
<dbReference type="Gene3D" id="1.10.150.390">
    <property type="match status" value="1"/>
</dbReference>
<dbReference type="Gene3D" id="1.10.1790.20">
    <property type="match status" value="1"/>
</dbReference>
<dbReference type="Gene3D" id="1.10.40.90">
    <property type="match status" value="1"/>
</dbReference>
<dbReference type="Gene3D" id="2.40.40.20">
    <property type="match status" value="1"/>
</dbReference>
<dbReference type="Gene3D" id="2.40.50.100">
    <property type="match status" value="3"/>
</dbReference>
<dbReference type="Gene3D" id="4.10.860.120">
    <property type="entry name" value="RNA polymerase II, clamp domain"/>
    <property type="match status" value="1"/>
</dbReference>
<dbReference type="Gene3D" id="1.10.274.100">
    <property type="entry name" value="RNA polymerase Rpb1, domain 3"/>
    <property type="match status" value="1"/>
</dbReference>
<dbReference type="HAMAP" id="MF_01322">
    <property type="entry name" value="RNApol_bact_RpoC"/>
    <property type="match status" value="1"/>
</dbReference>
<dbReference type="InterPro" id="IPR045867">
    <property type="entry name" value="DNA-dir_RpoC_beta_prime"/>
</dbReference>
<dbReference type="InterPro" id="IPR012754">
    <property type="entry name" value="DNA-dir_RpoC_beta_prime_bact"/>
</dbReference>
<dbReference type="InterPro" id="IPR000722">
    <property type="entry name" value="RNA_pol_asu"/>
</dbReference>
<dbReference type="InterPro" id="IPR006592">
    <property type="entry name" value="RNA_pol_N"/>
</dbReference>
<dbReference type="InterPro" id="IPR007080">
    <property type="entry name" value="RNA_pol_Rpb1_1"/>
</dbReference>
<dbReference type="InterPro" id="IPR007066">
    <property type="entry name" value="RNA_pol_Rpb1_3"/>
</dbReference>
<dbReference type="InterPro" id="IPR042102">
    <property type="entry name" value="RNA_pol_Rpb1_3_sf"/>
</dbReference>
<dbReference type="InterPro" id="IPR007083">
    <property type="entry name" value="RNA_pol_Rpb1_4"/>
</dbReference>
<dbReference type="InterPro" id="IPR007081">
    <property type="entry name" value="RNA_pol_Rpb1_5"/>
</dbReference>
<dbReference type="InterPro" id="IPR044893">
    <property type="entry name" value="RNA_pol_Rpb1_clamp_domain"/>
</dbReference>
<dbReference type="InterPro" id="IPR038120">
    <property type="entry name" value="Rpb1_funnel_sf"/>
</dbReference>
<dbReference type="NCBIfam" id="TIGR02386">
    <property type="entry name" value="rpoC_TIGR"/>
    <property type="match status" value="1"/>
</dbReference>
<dbReference type="PANTHER" id="PTHR19376">
    <property type="entry name" value="DNA-DIRECTED RNA POLYMERASE"/>
    <property type="match status" value="1"/>
</dbReference>
<dbReference type="PANTHER" id="PTHR19376:SF54">
    <property type="entry name" value="DNA-DIRECTED RNA POLYMERASE SUBUNIT BETA"/>
    <property type="match status" value="1"/>
</dbReference>
<dbReference type="Pfam" id="PF04997">
    <property type="entry name" value="RNA_pol_Rpb1_1"/>
    <property type="match status" value="1"/>
</dbReference>
<dbReference type="Pfam" id="PF00623">
    <property type="entry name" value="RNA_pol_Rpb1_2"/>
    <property type="match status" value="2"/>
</dbReference>
<dbReference type="Pfam" id="PF04983">
    <property type="entry name" value="RNA_pol_Rpb1_3"/>
    <property type="match status" value="1"/>
</dbReference>
<dbReference type="Pfam" id="PF05000">
    <property type="entry name" value="RNA_pol_Rpb1_4"/>
    <property type="match status" value="1"/>
</dbReference>
<dbReference type="Pfam" id="PF04998">
    <property type="entry name" value="RNA_pol_Rpb1_5"/>
    <property type="match status" value="1"/>
</dbReference>
<dbReference type="SMART" id="SM00663">
    <property type="entry name" value="RPOLA_N"/>
    <property type="match status" value="1"/>
</dbReference>
<dbReference type="SUPFAM" id="SSF64484">
    <property type="entry name" value="beta and beta-prime subunits of DNA dependent RNA-polymerase"/>
    <property type="match status" value="1"/>
</dbReference>
<proteinExistence type="inferred from homology"/>
<name>RPOC_FRAP2</name>
<sequence>MNNGILHQNYNSKKFDIIKISLASPEVIRSWSHGEVKKPETINYRTFKPERDGLFCAKIFGPIKDYECLCGKYKRLKHRGVVCERCGVEVEQAKVRRERMGHIDLVCPVVHIWYLKSLPSRIGLFLDMPLKNVEKVLYFESYIVTDPGMTPLEKKQLLTDDEYAEALENYGYEFEASMGAEAIRDLLADTDLETEIESLQAEYEESKSTAKKEKAIKRLRLLETFQASGNKPEWMVMTVLPVLPPDLRPLVPIEGGRFATSDLNDLYRRVINRNNRLKKLLDLNAPDIIVRNEKRMLQEAVDALLDNGRRGRAVTGSNKRPLKSLADMIKGKQGRFRQNLLGKRVDYSGRSVITVGPSLRLHECGLPKKMALELFKPFVYSKLRLGGYATTIKQAKRMVELEEAVVWDILEVVINEHPVLLNRAPTLHRLGIQAFEPKLIEGKAIQLHPLVCAAFNADFDGDQMAVHVPLTVESQLEARVLMMSTNNILSPASGQPIITPTQDIVLGLYYITREKEGARGEGKLFSNYDDVSRAYNSGTIDIHAKIKLRIDRQVFDTKGNTYNEKGVVNTTVGRALLLNILPEGLSFSLLNKVLVKKEISKIINQAFRVLGGKATVVLADKLMYAGFKYSTLSGVSVGVDDMTIPENKEAKVEEAEKEIKHITEQYQSSLITENERYNNIINIWSKTSDEVGASMMDAISKDTVMVNGENKEIESFNSVYMMAKSGARGSYNQMRQLAGMRGLMAKPDGTMIETAITANFREGLSVLQYFTSTHGARKGLADTALKTANAGYLTRRLVDVAQDLVVIEEDCGTDDGLMFSAIVEDGEVKVPLVERALGRTLAADVVTEKGVVLLEAGTLLDENLVEILDDNGIDMIKVRSPITCKTRRGLCAKCYGRDLARERKVNVGESVGVIAAQSIGEPGTQLTMRTFHTGGAASLGITVSDIKVKTAGKIKFKNIRTVTNKDGQNIVISRAGEIIVSDTMGRVREQHKIPMGAVVPLASGKGVEIGDVIATWDPHAQPLITDVAGKVVLEDVIDGITSKHTYDDLTGQQTIEITSISQRTTSKNLKPVVKVVDEKGNEIKSISLAVGAVLNVTDDSVLEVGDVVAKIPLEGSKNKDITGGLPRVAELFEARRPKDAAILSPCDGMVRLGNRDTKEKQRIEILDKSGHIAEEILLPKSRHLVVFDGEQVSKGDVLADGPTDPHDLLKYKGLEAFADYILIEAQSVYRMQGVVINDKHIETIVRQMLRKATILDEGDSKFVKDESIELVRILEENDRLAKEGKRLVEYELTLMGITRSSLSTESFLSAASFQETTRVLTEASIHSQVDQLRGLKENVLIGRLIPTGTGLAVRKESNKIEKMREELGVEDNMIFTEASSFNTEDTLFENQIEKEDKDINDDIEESLRNALESLDF</sequence>
<comment type="function">
    <text evidence="1">DNA-dependent RNA polymerase catalyzes the transcription of DNA into RNA using the four ribonucleoside triphosphates as substrates.</text>
</comment>
<comment type="catalytic activity">
    <reaction evidence="1">
        <text>RNA(n) + a ribonucleoside 5'-triphosphate = RNA(n+1) + diphosphate</text>
        <dbReference type="Rhea" id="RHEA:21248"/>
        <dbReference type="Rhea" id="RHEA-COMP:14527"/>
        <dbReference type="Rhea" id="RHEA-COMP:17342"/>
        <dbReference type="ChEBI" id="CHEBI:33019"/>
        <dbReference type="ChEBI" id="CHEBI:61557"/>
        <dbReference type="ChEBI" id="CHEBI:140395"/>
        <dbReference type="EC" id="2.7.7.6"/>
    </reaction>
</comment>
<comment type="cofactor">
    <cofactor evidence="1">
        <name>Mg(2+)</name>
        <dbReference type="ChEBI" id="CHEBI:18420"/>
    </cofactor>
    <text evidence="1">Binds 1 Mg(2+) ion per subunit.</text>
</comment>
<comment type="cofactor">
    <cofactor evidence="1">
        <name>Zn(2+)</name>
        <dbReference type="ChEBI" id="CHEBI:29105"/>
    </cofactor>
    <text evidence="1">Binds 2 Zn(2+) ions per subunit.</text>
</comment>
<comment type="subunit">
    <text evidence="1">The RNAP catalytic core consists of 2 alpha, 1 beta, 1 beta' and 1 omega subunit. When a sigma factor is associated with the core the holoenzyme is formed, which can initiate transcription.</text>
</comment>
<comment type="similarity">
    <text evidence="1">Belongs to the RNA polymerase beta' chain family.</text>
</comment>
<accession>B0TX11</accession>
<evidence type="ECO:0000255" key="1">
    <source>
        <dbReference type="HAMAP-Rule" id="MF_01322"/>
    </source>
</evidence>
<keyword id="KW-0240">DNA-directed RNA polymerase</keyword>
<keyword id="KW-0460">Magnesium</keyword>
<keyword id="KW-0479">Metal-binding</keyword>
<keyword id="KW-0548">Nucleotidyltransferase</keyword>
<keyword id="KW-0804">Transcription</keyword>
<keyword id="KW-0808">Transferase</keyword>
<keyword id="KW-0862">Zinc</keyword>
<organism>
    <name type="scientific">Francisella philomiragia subsp. philomiragia (strain ATCC 25017 / CCUG 19701 / FSC 153 / O#319-036)</name>
    <dbReference type="NCBI Taxonomy" id="484022"/>
    <lineage>
        <taxon>Bacteria</taxon>
        <taxon>Pseudomonadati</taxon>
        <taxon>Pseudomonadota</taxon>
        <taxon>Gammaproteobacteria</taxon>
        <taxon>Thiotrichales</taxon>
        <taxon>Francisellaceae</taxon>
        <taxon>Francisella</taxon>
    </lineage>
</organism>